<dbReference type="EC" id="4.1.1.106" evidence="4"/>
<dbReference type="EMBL" id="DS496190">
    <property type="protein sequence ID" value="EDO96742.1"/>
    <property type="molecule type" value="Genomic_DNA"/>
</dbReference>
<dbReference type="EMBL" id="CM008973">
    <property type="protein sequence ID" value="PNW75136.1"/>
    <property type="molecule type" value="Genomic_DNA"/>
</dbReference>
<dbReference type="RefSeq" id="XP_001703004.1">
    <property type="nucleotide sequence ID" value="XM_001702952.1"/>
</dbReference>
<dbReference type="SMR" id="A8JHB7"/>
<dbReference type="FunCoup" id="A8JHB7">
    <property type="interactions" value="452"/>
</dbReference>
<dbReference type="STRING" id="3055.A8JHB7"/>
<dbReference type="PaxDb" id="3055-EDO96742"/>
<dbReference type="EnsemblPlants" id="PNW75136">
    <property type="protein sequence ID" value="PNW75136"/>
    <property type="gene ID" value="CHLRE_12g514200v5"/>
</dbReference>
<dbReference type="GeneID" id="5728543"/>
<dbReference type="Gramene" id="PNW75136">
    <property type="protein sequence ID" value="PNW75136"/>
    <property type="gene ID" value="CHLRE_12g514200v5"/>
</dbReference>
<dbReference type="KEGG" id="cre:CHLRE_12g514200v5"/>
<dbReference type="eggNOG" id="KOG1238">
    <property type="taxonomic scope" value="Eukaryota"/>
</dbReference>
<dbReference type="HOGENOM" id="CLU_002865_7_1_1"/>
<dbReference type="InParanoid" id="A8JHB7"/>
<dbReference type="OMA" id="YGQPHFE"/>
<dbReference type="OrthoDB" id="269227at2759"/>
<dbReference type="Proteomes" id="UP000006906">
    <property type="component" value="Chromosome 12"/>
</dbReference>
<dbReference type="GO" id="GO:0009507">
    <property type="term" value="C:chloroplast"/>
    <property type="evidence" value="ECO:0007669"/>
    <property type="project" value="UniProtKB-SubCell"/>
</dbReference>
<dbReference type="GO" id="GO:0016020">
    <property type="term" value="C:membrane"/>
    <property type="evidence" value="ECO:0000318"/>
    <property type="project" value="GO_Central"/>
</dbReference>
<dbReference type="GO" id="GO:0008812">
    <property type="term" value="F:choline dehydrogenase activity"/>
    <property type="evidence" value="ECO:0000318"/>
    <property type="project" value="GO_Central"/>
</dbReference>
<dbReference type="GO" id="GO:0050660">
    <property type="term" value="F:flavin adenine dinucleotide binding"/>
    <property type="evidence" value="ECO:0007669"/>
    <property type="project" value="InterPro"/>
</dbReference>
<dbReference type="GO" id="GO:0016829">
    <property type="term" value="F:lyase activity"/>
    <property type="evidence" value="ECO:0007669"/>
    <property type="project" value="UniProtKB-KW"/>
</dbReference>
<dbReference type="GO" id="GO:0019285">
    <property type="term" value="P:glycine betaine biosynthetic process from choline"/>
    <property type="evidence" value="ECO:0000318"/>
    <property type="project" value="GO_Central"/>
</dbReference>
<dbReference type="Gene3D" id="3.50.50.60">
    <property type="entry name" value="FAD/NAD(P)-binding domain"/>
    <property type="match status" value="1"/>
</dbReference>
<dbReference type="Gene3D" id="3.30.560.10">
    <property type="entry name" value="Glucose Oxidase, domain 3"/>
    <property type="match status" value="1"/>
</dbReference>
<dbReference type="InterPro" id="IPR036188">
    <property type="entry name" value="FAD/NAD-bd_sf"/>
</dbReference>
<dbReference type="InterPro" id="IPR012132">
    <property type="entry name" value="GMC_OxRdtase"/>
</dbReference>
<dbReference type="InterPro" id="IPR000172">
    <property type="entry name" value="GMC_OxRdtase_N"/>
</dbReference>
<dbReference type="InterPro" id="IPR007867">
    <property type="entry name" value="GMC_OxRtase_C"/>
</dbReference>
<dbReference type="PANTHER" id="PTHR11552:SF147">
    <property type="entry name" value="CHOLINE DEHYDROGENASE, MITOCHONDRIAL"/>
    <property type="match status" value="1"/>
</dbReference>
<dbReference type="PANTHER" id="PTHR11552">
    <property type="entry name" value="GLUCOSE-METHANOL-CHOLINE GMC OXIDOREDUCTASE"/>
    <property type="match status" value="1"/>
</dbReference>
<dbReference type="Pfam" id="PF05199">
    <property type="entry name" value="GMC_oxred_C"/>
    <property type="match status" value="1"/>
</dbReference>
<dbReference type="Pfam" id="PF00732">
    <property type="entry name" value="GMC_oxred_N"/>
    <property type="match status" value="1"/>
</dbReference>
<dbReference type="PIRSF" id="PIRSF000137">
    <property type="entry name" value="Alcohol_oxidase"/>
    <property type="match status" value="1"/>
</dbReference>
<dbReference type="SUPFAM" id="SSF54373">
    <property type="entry name" value="FAD-linked reductases, C-terminal domain"/>
    <property type="match status" value="1"/>
</dbReference>
<dbReference type="SUPFAM" id="SSF51905">
    <property type="entry name" value="FAD/NAD(P)-binding domain"/>
    <property type="match status" value="1"/>
</dbReference>
<dbReference type="PROSITE" id="PS00624">
    <property type="entry name" value="GMC_OXRED_2"/>
    <property type="match status" value="1"/>
</dbReference>
<protein>
    <recommendedName>
        <fullName evidence="6">Fatty acid photodecarboxylase, chloroplastic</fullName>
        <shortName evidence="6">CrFAP</shortName>
        <ecNumber evidence="4">4.1.1.106</ecNumber>
    </recommendedName>
</protein>
<sequence>MMLGPKTVTRGATKGAAPRSMAARRVGGARRLSVRAAAGPAGSEKFDYVLVGGGTASCVLANKLSADGNKKVLVLEAGPTGDAMEVAVPAGITRLFAHPVMDWGMSSLTQKQLVAREIYLARGRMLGGSSGSNATLYHRGSAADYDAWGLEGWSSKDVLDWFVKAECYADGPKPYHGTGGSMNTEQPRYENVLHDEFFKAAAATGLPANPDFNDWSHPQDGFGEFQVSQKKGQRADTYRTYLKPAMARGNLKVVIGARATKVNIEKGSSGARTTGVEYAMQQFGDRFTAELAPGGEVLMCSGAVHTPHLLMLSGVGPAATLKEHGIDVVSDLSGVGQNLQDHPAAVLAARAKPEFEKLSVTSEVYDDKCNIKLGAVAQYLFQRRGPLATTGCDHGAFVRTSSSLSQPDLQMRFVPGCALDPDGVKSYIVFGELKKQGRAWPGGITLQLLAIRAKSKGSIGLKAADPFINPAININYFSDPADLATLVNAVKMARKIAAQEPLKKYLQEETFPGERASSDKDLEEYIRRTVHSGNALVGTAAMGASPAAGAVVSSADLKVFGVEGLRVVDASVLPRIPGGQTGAATVMVAERAAALLRGQATIAPSRQPVAV</sequence>
<name>FAP_CHLRE</name>
<comment type="function">
    <text evidence="1 4 5">Catalyzes the decarboxylation of free fatty acids to n-alkanes or n-alkenes in response to blue light (PubMed:28860382, PubMed:30144559). Substrate preference is toward fatty acids with C17 or C18 chains (PubMed:28860382, PubMed:30144559). Saturated fatty acids are converted to alkanes, not alkenes (PubMed:28860382, PubMed:30144559). The decarboxylation is initiated through electron abstraction from the fatty acid by the photo-excited FAD (By similarity).</text>
</comment>
<comment type="catalytic activity">
    <reaction evidence="4">
        <text>a long-chain fatty acid + hnu + H(+) = a long-chain alkane + CO2</text>
        <dbReference type="Rhea" id="RHEA:18969"/>
        <dbReference type="ChEBI" id="CHEBI:15378"/>
        <dbReference type="ChEBI" id="CHEBI:16526"/>
        <dbReference type="ChEBI" id="CHEBI:30212"/>
        <dbReference type="ChEBI" id="CHEBI:57560"/>
        <dbReference type="ChEBI" id="CHEBI:83563"/>
        <dbReference type="EC" id="4.1.1.106"/>
    </reaction>
    <physiologicalReaction direction="left-to-right" evidence="4">
        <dbReference type="Rhea" id="RHEA:18970"/>
    </physiologicalReaction>
</comment>
<comment type="catalytic activity">
    <reaction evidence="4">
        <text>hnu + hexadecanoate + H(+) = pentadecane + CO2</text>
        <dbReference type="Rhea" id="RHEA:56060"/>
        <dbReference type="ChEBI" id="CHEBI:7896"/>
        <dbReference type="ChEBI" id="CHEBI:15378"/>
        <dbReference type="ChEBI" id="CHEBI:16526"/>
        <dbReference type="ChEBI" id="CHEBI:28897"/>
        <dbReference type="ChEBI" id="CHEBI:30212"/>
        <dbReference type="EC" id="4.1.1.106"/>
    </reaction>
    <physiologicalReaction direction="left-to-right" evidence="4">
        <dbReference type="Rhea" id="RHEA:56061"/>
    </physiologicalReaction>
</comment>
<comment type="cofactor">
    <cofactor evidence="4">
        <name>FAD</name>
        <dbReference type="ChEBI" id="CHEBI:57692"/>
    </cofactor>
    <text evidence="4">Binds 1 FAD per subunit.</text>
</comment>
<comment type="activity regulation">
    <text evidence="4">Activated by blue light and repressed by red light.</text>
</comment>
<comment type="biophysicochemical properties">
    <phDependence>
        <text evidence="4">Optimum pH is 8.5 (with palmitate as substrate).</text>
    </phDependence>
</comment>
<comment type="subcellular location">
    <subcellularLocation>
        <location evidence="2">Plastid</location>
        <location evidence="2">Chloroplast</location>
    </subcellularLocation>
</comment>
<comment type="biotechnology">
    <text evidence="4">May be used in light-driven, bio-based production of hydrocarbons.</text>
</comment>
<comment type="similarity">
    <text evidence="7">Belongs to the GMC oxidoreductase family.</text>
</comment>
<organism>
    <name type="scientific">Chlamydomonas reinhardtii</name>
    <name type="common">Chlamydomonas smithii</name>
    <dbReference type="NCBI Taxonomy" id="3055"/>
    <lineage>
        <taxon>Eukaryota</taxon>
        <taxon>Viridiplantae</taxon>
        <taxon>Chlorophyta</taxon>
        <taxon>core chlorophytes</taxon>
        <taxon>Chlorophyceae</taxon>
        <taxon>CS clade</taxon>
        <taxon>Chlamydomonadales</taxon>
        <taxon>Chlamydomonadaceae</taxon>
        <taxon>Chlamydomonas</taxon>
    </lineage>
</organism>
<feature type="transit peptide" description="Chloroplast" evidence="2">
    <location>
        <begin position="1"/>
        <end position="36"/>
    </location>
</feature>
<feature type="chain" id="PRO_0000450330" description="Fatty acid photodecarboxylase, chloroplastic">
    <location>
        <begin position="37"/>
        <end position="611"/>
    </location>
</feature>
<feature type="region of interest" description="Disordered" evidence="3">
    <location>
        <begin position="1"/>
        <end position="22"/>
    </location>
</feature>
<feature type="binding site" evidence="1">
    <location>
        <begin position="55"/>
        <end position="56"/>
    </location>
    <ligand>
        <name>FAD</name>
        <dbReference type="ChEBI" id="CHEBI:57692"/>
    </ligand>
</feature>
<feature type="binding site" evidence="1">
    <location>
        <position position="76"/>
    </location>
    <ligand>
        <name>FAD</name>
        <dbReference type="ChEBI" id="CHEBI:57692"/>
    </ligand>
</feature>
<feature type="binding site" evidence="1">
    <location>
        <position position="125"/>
    </location>
    <ligand>
        <name>FAD</name>
        <dbReference type="ChEBI" id="CHEBI:57692"/>
    </ligand>
</feature>
<feature type="binding site" evidence="1">
    <location>
        <position position="129"/>
    </location>
    <ligand>
        <name>FAD</name>
        <dbReference type="ChEBI" id="CHEBI:57692"/>
    </ligand>
</feature>
<feature type="binding site" evidence="1">
    <location>
        <begin position="133"/>
        <end position="136"/>
    </location>
    <ligand>
        <name>FAD</name>
        <dbReference type="ChEBI" id="CHEBI:57692"/>
    </ligand>
</feature>
<feature type="binding site" evidence="1">
    <location>
        <position position="392"/>
    </location>
    <ligand>
        <name>hexadecanoate</name>
        <dbReference type="ChEBI" id="CHEBI:7896"/>
    </ligand>
</feature>
<feature type="binding site" evidence="1">
    <location>
        <position position="412"/>
    </location>
    <ligand>
        <name>hexadecanoate</name>
        <dbReference type="ChEBI" id="CHEBI:7896"/>
    </ligand>
</feature>
<feature type="binding site" evidence="1">
    <location>
        <position position="427"/>
    </location>
    <ligand>
        <name>hexadecanoate</name>
        <dbReference type="ChEBI" id="CHEBI:7896"/>
    </ligand>
</feature>
<feature type="binding site" evidence="1">
    <location>
        <position position="447"/>
    </location>
    <ligand>
        <name>hexadecanoate</name>
        <dbReference type="ChEBI" id="CHEBI:7896"/>
    </ligand>
</feature>
<feature type="binding site" evidence="1">
    <location>
        <position position="582"/>
    </location>
    <ligand>
        <name>FAD</name>
        <dbReference type="ChEBI" id="CHEBI:57692"/>
    </ligand>
</feature>
<reference key="1">
    <citation type="journal article" date="2007" name="Science">
        <title>The Chlamydomonas genome reveals the evolution of key animal and plant functions.</title>
        <authorList>
            <person name="Merchant S.S."/>
            <person name="Prochnik S.E."/>
            <person name="Vallon O."/>
            <person name="Harris E.H."/>
            <person name="Karpowicz S.J."/>
            <person name="Witman G.B."/>
            <person name="Terry A."/>
            <person name="Salamov A."/>
            <person name="Fritz-Laylin L.K."/>
            <person name="Marechal-Drouard L."/>
            <person name="Marshall W.F."/>
            <person name="Qu L.H."/>
            <person name="Nelson D.R."/>
            <person name="Sanderfoot A.A."/>
            <person name="Spalding M.H."/>
            <person name="Kapitonov V.V."/>
            <person name="Ren Q."/>
            <person name="Ferris P."/>
            <person name="Lindquist E."/>
            <person name="Shapiro H."/>
            <person name="Lucas S.M."/>
            <person name="Grimwood J."/>
            <person name="Schmutz J."/>
            <person name="Cardol P."/>
            <person name="Cerutti H."/>
            <person name="Chanfreau G."/>
            <person name="Chen C.L."/>
            <person name="Cognat V."/>
            <person name="Croft M.T."/>
            <person name="Dent R."/>
            <person name="Dutcher S."/>
            <person name="Fernandez E."/>
            <person name="Fukuzawa H."/>
            <person name="Gonzalez-Ballester D."/>
            <person name="Gonzalez-Halphen D."/>
            <person name="Hallmann A."/>
            <person name="Hanikenne M."/>
            <person name="Hippler M."/>
            <person name="Inwood W."/>
            <person name="Jabbari K."/>
            <person name="Kalanon M."/>
            <person name="Kuras R."/>
            <person name="Lefebvre P.A."/>
            <person name="Lemaire S.D."/>
            <person name="Lobanov A.V."/>
            <person name="Lohr M."/>
            <person name="Manuell A."/>
            <person name="Meier I."/>
            <person name="Mets L."/>
            <person name="Mittag M."/>
            <person name="Mittelmeier T."/>
            <person name="Moroney J.V."/>
            <person name="Moseley J."/>
            <person name="Napoli C."/>
            <person name="Nedelcu A.M."/>
            <person name="Niyogi K."/>
            <person name="Novoselov S.V."/>
            <person name="Paulsen I.T."/>
            <person name="Pazour G.J."/>
            <person name="Purton S."/>
            <person name="Ral J.P."/>
            <person name="Riano-Pachon D.M."/>
            <person name="Riekhof W."/>
            <person name="Rymarquis L."/>
            <person name="Schroda M."/>
            <person name="Stern D."/>
            <person name="Umen J."/>
            <person name="Willows R."/>
            <person name="Wilson N."/>
            <person name="Zimmer S.L."/>
            <person name="Allmer J."/>
            <person name="Balk J."/>
            <person name="Bisova K."/>
            <person name="Chen C.J."/>
            <person name="Elias M."/>
            <person name="Gendler K."/>
            <person name="Hauser C."/>
            <person name="Lamb M.R."/>
            <person name="Ledford H."/>
            <person name="Long J.C."/>
            <person name="Minagawa J."/>
            <person name="Page M.D."/>
            <person name="Pan J."/>
            <person name="Pootakham W."/>
            <person name="Roje S."/>
            <person name="Rose A."/>
            <person name="Stahlberg E."/>
            <person name="Terauchi A.M."/>
            <person name="Yang P."/>
            <person name="Ball S."/>
            <person name="Bowler C."/>
            <person name="Dieckmann C.L."/>
            <person name="Gladyshev V.N."/>
            <person name="Green P."/>
            <person name="Jorgensen R."/>
            <person name="Mayfield S."/>
            <person name="Mueller-Roeber B."/>
            <person name="Rajamani S."/>
            <person name="Sayre R.T."/>
            <person name="Brokstein P."/>
            <person name="Dubchak I."/>
            <person name="Goodstein D."/>
            <person name="Hornick L."/>
            <person name="Huang Y.W."/>
            <person name="Jhaveri J."/>
            <person name="Luo Y."/>
            <person name="Martinez D."/>
            <person name="Ngau W.C."/>
            <person name="Otillar B."/>
            <person name="Poliakov A."/>
            <person name="Porter A."/>
            <person name="Szajkowski L."/>
            <person name="Werner G."/>
            <person name="Zhou K."/>
            <person name="Grigoriev I.V."/>
            <person name="Rokhsar D.S."/>
            <person name="Grossman A.R."/>
        </authorList>
    </citation>
    <scope>NUCLEOTIDE SEQUENCE [LARGE SCALE GENOMIC DNA]</scope>
    <source>
        <strain>CC-503</strain>
    </source>
</reference>
<reference key="2">
    <citation type="submission" date="2017-07" db="EMBL/GenBank/DDBJ databases">
        <title>WGS assembly of Chlamydomonas reinhardtii.</title>
        <authorList>
            <consortium name="Chlamydomonas Annotation Team"/>
            <consortium name="JGI Annotation Team"/>
            <person name="Merchant S.S."/>
            <person name="Prochnik S.E."/>
            <person name="Vallon O."/>
            <person name="Harris E.H."/>
            <person name="Karpowicz S.J."/>
            <person name="Witman G.B."/>
            <person name="Terry A."/>
            <person name="Salamov A."/>
            <person name="Fritz-Laylin L.K."/>
            <person name="Marechal-Drouard L."/>
            <person name="Marshall W.F."/>
            <person name="Qu L.H."/>
            <person name="Nelson D.R."/>
            <person name="Sanderfoot A.A."/>
            <person name="Spalding M.H."/>
            <person name="Kapitonov V.V."/>
            <person name="Ren Q."/>
            <person name="Ferris P."/>
            <person name="Lindquist E."/>
            <person name="Shapiro H."/>
            <person name="Lucas S.M."/>
            <person name="Grimwood J."/>
            <person name="Schmutz J."/>
            <person name="Grigoriev I.V."/>
            <person name="Rokhsar D.S."/>
        </authorList>
    </citation>
    <scope>NUCLEOTIDE SEQUENCE [LARGE SCALE GENOMIC DNA]</scope>
    <source>
        <strain>CC-503</strain>
    </source>
</reference>
<reference key="3">
    <citation type="journal article" date="2017" name="Science">
        <title>An algal photoenzyme converts fatty acids to hydrocarbons.</title>
        <authorList>
            <person name="Sorigue D."/>
            <person name="Legeret B."/>
            <person name="Cuine S."/>
            <person name="Blangy S."/>
            <person name="Moulin S."/>
            <person name="Billon E."/>
            <person name="Richaud P."/>
            <person name="Brugiere S."/>
            <person name="Coute Y."/>
            <person name="Nurizzo D."/>
            <person name="Mueller P."/>
            <person name="Brettel K."/>
            <person name="Pignol D."/>
            <person name="Arnoux P."/>
            <person name="Li-Beisson Y."/>
            <person name="Peltier G."/>
            <person name="Beisson F."/>
        </authorList>
    </citation>
    <scope>FUNCTION</scope>
    <scope>CATALYTIC ACTIVITY</scope>
    <scope>COFACTOR</scope>
    <scope>ACTIVITY REGULATION</scope>
    <scope>BIOPHYSICOCHEMICAL PROPERTIES</scope>
    <scope>BIOTECHNOLOGY</scope>
    <source>
        <strain>NC64A</strain>
    </source>
</reference>
<reference key="4">
    <citation type="journal article" date="2018" name="Metab. Eng.">
        <title>Synthetic metabolic pathways for photobiological conversion of CO2 into hydrocarbon fuel.</title>
        <authorList>
            <person name="Yunus I.S."/>
            <person name="Wichmann J."/>
            <person name="Woerdenweber R."/>
            <person name="Lauersen K.J."/>
            <person name="Kruse O."/>
            <person name="Jones P.R."/>
        </authorList>
    </citation>
    <scope>FUNCTION</scope>
</reference>
<accession>A8JHB7</accession>
<evidence type="ECO:0000250" key="1">
    <source>
        <dbReference type="UniProtKB" id="A0A248QE08"/>
    </source>
</evidence>
<evidence type="ECO:0000255" key="2"/>
<evidence type="ECO:0000256" key="3">
    <source>
        <dbReference type="SAM" id="MobiDB-lite"/>
    </source>
</evidence>
<evidence type="ECO:0000269" key="4">
    <source>
    </source>
</evidence>
<evidence type="ECO:0000269" key="5">
    <source>
    </source>
</evidence>
<evidence type="ECO:0000303" key="6">
    <source>
    </source>
</evidence>
<evidence type="ECO:0000305" key="7"/>
<evidence type="ECO:0000312" key="8">
    <source>
        <dbReference type="EMBL" id="EDO96742.1"/>
    </source>
</evidence>
<evidence type="ECO:0000312" key="9">
    <source>
        <dbReference type="EMBL" id="PNW75136.1"/>
    </source>
</evidence>
<gene>
    <name evidence="6" type="primary">FAP</name>
    <name evidence="9" type="ORF">CHLRE_12g514200v5</name>
    <name evidence="8" type="ORF">CHLREDRAFT_140509</name>
</gene>
<keyword id="KW-0150">Chloroplast</keyword>
<keyword id="KW-0274">FAD</keyword>
<keyword id="KW-0285">Flavoprotein</keyword>
<keyword id="KW-0456">Lyase</keyword>
<keyword id="KW-0934">Plastid</keyword>
<keyword id="KW-1185">Reference proteome</keyword>
<keyword id="KW-0809">Transit peptide</keyword>
<proteinExistence type="evidence at protein level"/>